<keyword id="KW-0963">Cytoplasm</keyword>
<keyword id="KW-0238">DNA-binding</keyword>
<reference key="1">
    <citation type="journal article" date="2009" name="J. Bacteriol.">
        <title>The genome of Burkholderia cenocepacia J2315, an epidemic pathogen of cystic fibrosis patients.</title>
        <authorList>
            <person name="Holden M.T."/>
            <person name="Seth-Smith H.M."/>
            <person name="Crossman L.C."/>
            <person name="Sebaihia M."/>
            <person name="Bentley S.D."/>
            <person name="Cerdeno-Tarraga A.M."/>
            <person name="Thomson N.R."/>
            <person name="Bason N."/>
            <person name="Quail M.A."/>
            <person name="Sharp S."/>
            <person name="Cherevach I."/>
            <person name="Churcher C."/>
            <person name="Goodhead I."/>
            <person name="Hauser H."/>
            <person name="Holroyd N."/>
            <person name="Mungall K."/>
            <person name="Scott P."/>
            <person name="Walker D."/>
            <person name="White B."/>
            <person name="Rose H."/>
            <person name="Iversen P."/>
            <person name="Mil-Homens D."/>
            <person name="Rocha E.P."/>
            <person name="Fialho A.M."/>
            <person name="Baldwin A."/>
            <person name="Dowson C."/>
            <person name="Barrell B.G."/>
            <person name="Govan J.R."/>
            <person name="Vandamme P."/>
            <person name="Hart C.A."/>
            <person name="Mahenthiralingam E."/>
            <person name="Parkhill J."/>
        </authorList>
    </citation>
    <scope>NUCLEOTIDE SEQUENCE [LARGE SCALE GENOMIC DNA]</scope>
    <source>
        <strain>ATCC BAA-245 / DSM 16553 / LMG 16656 / NCTC 13227 / J2315 / CF5610</strain>
    </source>
</reference>
<organism>
    <name type="scientific">Burkholderia cenocepacia (strain ATCC BAA-245 / DSM 16553 / LMG 16656 / NCTC 13227 / J2315 / CF5610)</name>
    <name type="common">Burkholderia cepacia (strain J2315)</name>
    <dbReference type="NCBI Taxonomy" id="216591"/>
    <lineage>
        <taxon>Bacteria</taxon>
        <taxon>Pseudomonadati</taxon>
        <taxon>Pseudomonadota</taxon>
        <taxon>Betaproteobacteria</taxon>
        <taxon>Burkholderiales</taxon>
        <taxon>Burkholderiaceae</taxon>
        <taxon>Burkholderia</taxon>
        <taxon>Burkholderia cepacia complex</taxon>
    </lineage>
</organism>
<proteinExistence type="inferred from homology"/>
<protein>
    <recommendedName>
        <fullName evidence="1">Nucleoid-associated protein BceJ2315_18610</fullName>
    </recommendedName>
</protein>
<name>Y1861_BURCJ</name>
<feature type="chain" id="PRO_1000114591" description="Nucleoid-associated protein BceJ2315_18610">
    <location>
        <begin position="1"/>
        <end position="108"/>
    </location>
</feature>
<feature type="region of interest" description="Disordered" evidence="2">
    <location>
        <begin position="85"/>
        <end position="108"/>
    </location>
</feature>
<feature type="compositionally biased region" description="Polar residues" evidence="2">
    <location>
        <begin position="85"/>
        <end position="95"/>
    </location>
</feature>
<feature type="compositionally biased region" description="Pro residues" evidence="2">
    <location>
        <begin position="99"/>
        <end position="108"/>
    </location>
</feature>
<accession>B4EAY3</accession>
<gene>
    <name type="ordered locus">BceJ2315_18610</name>
    <name type="ORF">BCAL1898</name>
</gene>
<sequence>MLKGNLAGLMKQAQQMQENMKKMQEQLALIEVEGQSGAGLVKVTMTCRNEVRRVSIDPSLLADDKDMLEDLVAAAFNDAVRKAEATSQEKMSGMTSGLPLPPGFKLPF</sequence>
<comment type="function">
    <text evidence="1">Binds to DNA and alters its conformation. May be involved in regulation of gene expression, nucleoid organization and DNA protection.</text>
</comment>
<comment type="subunit">
    <text evidence="1">Homodimer.</text>
</comment>
<comment type="subcellular location">
    <subcellularLocation>
        <location evidence="1">Cytoplasm</location>
        <location evidence="1">Nucleoid</location>
    </subcellularLocation>
</comment>
<comment type="similarity">
    <text evidence="1">Belongs to the YbaB/EbfC family.</text>
</comment>
<dbReference type="EMBL" id="AM747720">
    <property type="protein sequence ID" value="CAR52198.1"/>
    <property type="molecule type" value="Genomic_DNA"/>
</dbReference>
<dbReference type="RefSeq" id="WP_006482124.1">
    <property type="nucleotide sequence ID" value="NC_011000.1"/>
</dbReference>
<dbReference type="SMR" id="B4EAY3"/>
<dbReference type="KEGG" id="bcj:BCAL1898"/>
<dbReference type="eggNOG" id="COG0718">
    <property type="taxonomic scope" value="Bacteria"/>
</dbReference>
<dbReference type="HOGENOM" id="CLU_140930_0_0_4"/>
<dbReference type="BioCyc" id="BCEN216591:G1G1V-2090-MONOMER"/>
<dbReference type="Proteomes" id="UP000001035">
    <property type="component" value="Chromosome 1"/>
</dbReference>
<dbReference type="GO" id="GO:0043590">
    <property type="term" value="C:bacterial nucleoid"/>
    <property type="evidence" value="ECO:0007669"/>
    <property type="project" value="UniProtKB-UniRule"/>
</dbReference>
<dbReference type="GO" id="GO:0005829">
    <property type="term" value="C:cytosol"/>
    <property type="evidence" value="ECO:0007669"/>
    <property type="project" value="TreeGrafter"/>
</dbReference>
<dbReference type="GO" id="GO:0003677">
    <property type="term" value="F:DNA binding"/>
    <property type="evidence" value="ECO:0007669"/>
    <property type="project" value="UniProtKB-UniRule"/>
</dbReference>
<dbReference type="FunFam" id="3.30.1310.10:FF:000001">
    <property type="entry name" value="Nucleoid-associated protein YbaB"/>
    <property type="match status" value="1"/>
</dbReference>
<dbReference type="Gene3D" id="3.30.1310.10">
    <property type="entry name" value="Nucleoid-associated protein YbaB-like domain"/>
    <property type="match status" value="1"/>
</dbReference>
<dbReference type="HAMAP" id="MF_00274">
    <property type="entry name" value="DNA_YbaB_EbfC"/>
    <property type="match status" value="1"/>
</dbReference>
<dbReference type="InterPro" id="IPR036894">
    <property type="entry name" value="YbaB-like_sf"/>
</dbReference>
<dbReference type="InterPro" id="IPR004401">
    <property type="entry name" value="YbaB/EbfC"/>
</dbReference>
<dbReference type="NCBIfam" id="TIGR00103">
    <property type="entry name" value="DNA_YbaB_EbfC"/>
    <property type="match status" value="1"/>
</dbReference>
<dbReference type="PANTHER" id="PTHR33449">
    <property type="entry name" value="NUCLEOID-ASSOCIATED PROTEIN YBAB"/>
    <property type="match status" value="1"/>
</dbReference>
<dbReference type="PANTHER" id="PTHR33449:SF1">
    <property type="entry name" value="NUCLEOID-ASSOCIATED PROTEIN YBAB"/>
    <property type="match status" value="1"/>
</dbReference>
<dbReference type="Pfam" id="PF02575">
    <property type="entry name" value="YbaB_DNA_bd"/>
    <property type="match status" value="1"/>
</dbReference>
<dbReference type="PIRSF" id="PIRSF004555">
    <property type="entry name" value="UCP004555"/>
    <property type="match status" value="1"/>
</dbReference>
<dbReference type="SUPFAM" id="SSF82607">
    <property type="entry name" value="YbaB-like"/>
    <property type="match status" value="1"/>
</dbReference>
<evidence type="ECO:0000255" key="1">
    <source>
        <dbReference type="HAMAP-Rule" id="MF_00274"/>
    </source>
</evidence>
<evidence type="ECO:0000256" key="2">
    <source>
        <dbReference type="SAM" id="MobiDB-lite"/>
    </source>
</evidence>